<keyword id="KW-0031">Aminopeptidase</keyword>
<keyword id="KW-0963">Cytoplasm</keyword>
<keyword id="KW-0378">Hydrolase</keyword>
<keyword id="KW-0479">Metal-binding</keyword>
<keyword id="KW-0645">Protease</keyword>
<keyword id="KW-1185">Reference proteome</keyword>
<reference key="1">
    <citation type="journal article" date="2009" name="Genome Res.">
        <title>Comparative genomics of protoploid Saccharomycetaceae.</title>
        <authorList>
            <consortium name="The Genolevures Consortium"/>
            <person name="Souciet J.-L."/>
            <person name="Dujon B."/>
            <person name="Gaillardin C."/>
            <person name="Johnston M."/>
            <person name="Baret P.V."/>
            <person name="Cliften P."/>
            <person name="Sherman D.J."/>
            <person name="Weissenbach J."/>
            <person name="Westhof E."/>
            <person name="Wincker P."/>
            <person name="Jubin C."/>
            <person name="Poulain J."/>
            <person name="Barbe V."/>
            <person name="Segurens B."/>
            <person name="Artiguenave F."/>
            <person name="Anthouard V."/>
            <person name="Vacherie B."/>
            <person name="Val M.-E."/>
            <person name="Fulton R.S."/>
            <person name="Minx P."/>
            <person name="Wilson R."/>
            <person name="Durrens P."/>
            <person name="Jean G."/>
            <person name="Marck C."/>
            <person name="Martin T."/>
            <person name="Nikolski M."/>
            <person name="Rolland T."/>
            <person name="Seret M.-L."/>
            <person name="Casaregola S."/>
            <person name="Despons L."/>
            <person name="Fairhead C."/>
            <person name="Fischer G."/>
            <person name="Lafontaine I."/>
            <person name="Leh V."/>
            <person name="Lemaire M."/>
            <person name="de Montigny J."/>
            <person name="Neuveglise C."/>
            <person name="Thierry A."/>
            <person name="Blanc-Lenfle I."/>
            <person name="Bleykasten C."/>
            <person name="Diffels J."/>
            <person name="Fritsch E."/>
            <person name="Frangeul L."/>
            <person name="Goeffon A."/>
            <person name="Jauniaux N."/>
            <person name="Kachouri-Lafond R."/>
            <person name="Payen C."/>
            <person name="Potier S."/>
            <person name="Pribylova L."/>
            <person name="Ozanne C."/>
            <person name="Richard G.-F."/>
            <person name="Sacerdot C."/>
            <person name="Straub M.-L."/>
            <person name="Talla E."/>
        </authorList>
    </citation>
    <scope>NUCLEOTIDE SEQUENCE [LARGE SCALE GENOMIC DNA]</scope>
    <source>
        <strain>ATCC 56472 / CBS 6340 / NRRL Y-8284</strain>
    </source>
</reference>
<feature type="chain" id="PRO_0000407654" description="Methionine aminopeptidase 2">
    <location>
        <begin position="1"/>
        <end position="420"/>
    </location>
</feature>
<feature type="region of interest" description="Disordered" evidence="2">
    <location>
        <begin position="1"/>
        <end position="48"/>
    </location>
</feature>
<feature type="binding site" evidence="1">
    <location>
        <position position="172"/>
    </location>
    <ligand>
        <name>substrate</name>
    </ligand>
</feature>
<feature type="binding site" evidence="1">
    <location>
        <position position="192"/>
    </location>
    <ligand>
        <name>a divalent metal cation</name>
        <dbReference type="ChEBI" id="CHEBI:60240"/>
        <label>1</label>
    </ligand>
</feature>
<feature type="binding site" evidence="1">
    <location>
        <position position="203"/>
    </location>
    <ligand>
        <name>a divalent metal cation</name>
        <dbReference type="ChEBI" id="CHEBI:60240"/>
        <label>1</label>
    </ligand>
</feature>
<feature type="binding site" evidence="1">
    <location>
        <position position="203"/>
    </location>
    <ligand>
        <name>a divalent metal cation</name>
        <dbReference type="ChEBI" id="CHEBI:60240"/>
        <label>2</label>
        <note>catalytic</note>
    </ligand>
</feature>
<feature type="binding site" evidence="1">
    <location>
        <position position="272"/>
    </location>
    <ligand>
        <name>a divalent metal cation</name>
        <dbReference type="ChEBI" id="CHEBI:60240"/>
        <label>2</label>
        <note>catalytic</note>
    </ligand>
</feature>
<feature type="binding site" evidence="1">
    <location>
        <position position="280"/>
    </location>
    <ligand>
        <name>substrate</name>
    </ligand>
</feature>
<feature type="binding site" evidence="1">
    <location>
        <position position="305"/>
    </location>
    <ligand>
        <name>a divalent metal cation</name>
        <dbReference type="ChEBI" id="CHEBI:60240"/>
        <label>2</label>
        <note>catalytic</note>
    </ligand>
</feature>
<feature type="binding site" evidence="1">
    <location>
        <position position="401"/>
    </location>
    <ligand>
        <name>a divalent metal cation</name>
        <dbReference type="ChEBI" id="CHEBI:60240"/>
        <label>1</label>
    </ligand>
</feature>
<feature type="binding site" evidence="1">
    <location>
        <position position="401"/>
    </location>
    <ligand>
        <name>a divalent metal cation</name>
        <dbReference type="ChEBI" id="CHEBI:60240"/>
        <label>2</label>
        <note>catalytic</note>
    </ligand>
</feature>
<gene>
    <name evidence="1" type="primary">MAP2</name>
    <name type="ordered locus">KLTH0C05962g</name>
</gene>
<sequence length="420" mass="47002">MSDAIAKDAVNTSSEKEPVSATPELKTSGSPDAAVSSGDKKKKKKKKKTNNIKNIALLYPDEKYPEGEWMDYHQDFNLQRTTDEEKRYLTRDAENQQRWNDMRKGAEIHRRVRKNLQNKLKPDMTLTEVVNIVENATRKFTGVDENGDHVDRPKSQGVGFPTGVSLNHCAAHFTPNAGDQTVLRYEDVMKVDIGVQVNGYIVDSAWTVAFDPKYDNLLQAVREATNTGVREAGIDVRLTDIGEAIQEVMESYEVELNGKTHQVKPCRNLCGHNIAPYRIHGGKSVPIVKNGDQTKMEEGEHFAIETFGSTGRGFVVPGGEVSHYAKSAEADGLPAPSLSRAKSLLKTIDENFGTLPFCRRYLDRLGEDKYLFALNSLVKHGIVQDYPPLNDVQGSYTAQFEHTILLHPHRKEVVSRGEDY</sequence>
<comment type="function">
    <text evidence="1">Cotranslationally removes the N-terminal methionine from nascent proteins. The N-terminal methionine is often cleaved when the second residue in the primary sequence is small and uncharged (Met-Ala-, Cys, Gly, Pro, Ser, Thr, or Val).</text>
</comment>
<comment type="catalytic activity">
    <reaction evidence="1">
        <text>Release of N-terminal amino acids, preferentially methionine, from peptides and arylamides.</text>
        <dbReference type="EC" id="3.4.11.18"/>
    </reaction>
</comment>
<comment type="cofactor">
    <cofactor evidence="1">
        <name>Co(2+)</name>
        <dbReference type="ChEBI" id="CHEBI:48828"/>
    </cofactor>
    <cofactor evidence="1">
        <name>Zn(2+)</name>
        <dbReference type="ChEBI" id="CHEBI:29105"/>
    </cofactor>
    <cofactor evidence="1">
        <name>Mn(2+)</name>
        <dbReference type="ChEBI" id="CHEBI:29035"/>
    </cofactor>
    <cofactor evidence="1">
        <name>Fe(2+)</name>
        <dbReference type="ChEBI" id="CHEBI:29033"/>
    </cofactor>
    <text evidence="1">Binds 2 divalent metal cations per subunit. Has a high-affinity and a low affinity metal-binding site. The true nature of the physiological cofactor is under debate. The enzyme is active with cobalt, zinc, manganese or divalent iron ions. Most likely, methionine aminopeptidases function as mononuclear Fe(2+)-metalloproteases under physiological conditions, and the catalytically relevant metal-binding site has been assigned to the histidine-containing high-affinity site.</text>
</comment>
<comment type="subcellular location">
    <subcellularLocation>
        <location evidence="1">Cytoplasm</location>
    </subcellularLocation>
</comment>
<comment type="similarity">
    <text evidence="1">Belongs to the peptidase M24A family. Methionine aminopeptidase eukaryotic type 2 subfamily.</text>
</comment>
<evidence type="ECO:0000255" key="1">
    <source>
        <dbReference type="HAMAP-Rule" id="MF_03175"/>
    </source>
</evidence>
<evidence type="ECO:0000256" key="2">
    <source>
        <dbReference type="SAM" id="MobiDB-lite"/>
    </source>
</evidence>
<organism>
    <name type="scientific">Lachancea thermotolerans (strain ATCC 56472 / CBS 6340 / NRRL Y-8284)</name>
    <name type="common">Yeast</name>
    <name type="synonym">Kluyveromyces thermotolerans</name>
    <dbReference type="NCBI Taxonomy" id="559295"/>
    <lineage>
        <taxon>Eukaryota</taxon>
        <taxon>Fungi</taxon>
        <taxon>Dikarya</taxon>
        <taxon>Ascomycota</taxon>
        <taxon>Saccharomycotina</taxon>
        <taxon>Saccharomycetes</taxon>
        <taxon>Saccharomycetales</taxon>
        <taxon>Saccharomycetaceae</taxon>
        <taxon>Lachancea</taxon>
    </lineage>
</organism>
<proteinExistence type="inferred from homology"/>
<protein>
    <recommendedName>
        <fullName evidence="1">Methionine aminopeptidase 2</fullName>
        <shortName evidence="1">MAP 2</shortName>
        <shortName evidence="1">MetAP 2</shortName>
        <ecNumber evidence="1">3.4.11.18</ecNumber>
    </recommendedName>
    <alternativeName>
        <fullName evidence="1">Peptidase M</fullName>
    </alternativeName>
</protein>
<name>MAP2_LACTC</name>
<accession>C5DE35</accession>
<dbReference type="EC" id="3.4.11.18" evidence="1"/>
<dbReference type="EMBL" id="CU928167">
    <property type="protein sequence ID" value="CAR22046.1"/>
    <property type="molecule type" value="Genomic_DNA"/>
</dbReference>
<dbReference type="RefSeq" id="XP_002552484.1">
    <property type="nucleotide sequence ID" value="XM_002552438.1"/>
</dbReference>
<dbReference type="SMR" id="C5DE35"/>
<dbReference type="FunCoup" id="C5DE35">
    <property type="interactions" value="1228"/>
</dbReference>
<dbReference type="STRING" id="559295.C5DE35"/>
<dbReference type="MEROPS" id="M24.002"/>
<dbReference type="GeneID" id="8291352"/>
<dbReference type="KEGG" id="lth:KLTH0C05962g"/>
<dbReference type="eggNOG" id="KOG2775">
    <property type="taxonomic scope" value="Eukaryota"/>
</dbReference>
<dbReference type="HOGENOM" id="CLU_015857_7_1_1"/>
<dbReference type="InParanoid" id="C5DE35"/>
<dbReference type="OMA" id="PFAKRWL"/>
<dbReference type="OrthoDB" id="7848262at2759"/>
<dbReference type="Proteomes" id="UP000002036">
    <property type="component" value="Chromosome C"/>
</dbReference>
<dbReference type="GO" id="GO:0005737">
    <property type="term" value="C:cytoplasm"/>
    <property type="evidence" value="ECO:0007669"/>
    <property type="project" value="UniProtKB-SubCell"/>
</dbReference>
<dbReference type="GO" id="GO:0004239">
    <property type="term" value="F:initiator methionyl aminopeptidase activity"/>
    <property type="evidence" value="ECO:0007669"/>
    <property type="project" value="UniProtKB-UniRule"/>
</dbReference>
<dbReference type="GO" id="GO:0046872">
    <property type="term" value="F:metal ion binding"/>
    <property type="evidence" value="ECO:0007669"/>
    <property type="project" value="UniProtKB-UniRule"/>
</dbReference>
<dbReference type="GO" id="GO:0070006">
    <property type="term" value="F:metalloaminopeptidase activity"/>
    <property type="evidence" value="ECO:0007669"/>
    <property type="project" value="UniProtKB-UniRule"/>
</dbReference>
<dbReference type="GO" id="GO:0006508">
    <property type="term" value="P:proteolysis"/>
    <property type="evidence" value="ECO:0007669"/>
    <property type="project" value="UniProtKB-KW"/>
</dbReference>
<dbReference type="CDD" id="cd01088">
    <property type="entry name" value="MetAP2"/>
    <property type="match status" value="1"/>
</dbReference>
<dbReference type="Gene3D" id="3.90.230.10">
    <property type="entry name" value="Creatinase/methionine aminopeptidase superfamily"/>
    <property type="match status" value="1"/>
</dbReference>
<dbReference type="Gene3D" id="1.10.10.10">
    <property type="entry name" value="Winged helix-like DNA-binding domain superfamily/Winged helix DNA-binding domain"/>
    <property type="match status" value="1"/>
</dbReference>
<dbReference type="HAMAP" id="MF_03175">
    <property type="entry name" value="MetAP_2_euk"/>
    <property type="match status" value="1"/>
</dbReference>
<dbReference type="InterPro" id="IPR036005">
    <property type="entry name" value="Creatinase/aminopeptidase-like"/>
</dbReference>
<dbReference type="InterPro" id="IPR050247">
    <property type="entry name" value="Met_Aminopeptidase_Type2"/>
</dbReference>
<dbReference type="InterPro" id="IPR000994">
    <property type="entry name" value="Pept_M24"/>
</dbReference>
<dbReference type="InterPro" id="IPR001714">
    <property type="entry name" value="Pept_M24_MAP"/>
</dbReference>
<dbReference type="InterPro" id="IPR002468">
    <property type="entry name" value="Pept_M24A_MAP2"/>
</dbReference>
<dbReference type="InterPro" id="IPR018349">
    <property type="entry name" value="Pept_M24A_MAP2_BS"/>
</dbReference>
<dbReference type="InterPro" id="IPR036388">
    <property type="entry name" value="WH-like_DNA-bd_sf"/>
</dbReference>
<dbReference type="InterPro" id="IPR036390">
    <property type="entry name" value="WH_DNA-bd_sf"/>
</dbReference>
<dbReference type="NCBIfam" id="TIGR00501">
    <property type="entry name" value="met_pdase_II"/>
    <property type="match status" value="1"/>
</dbReference>
<dbReference type="PANTHER" id="PTHR45777">
    <property type="entry name" value="METHIONINE AMINOPEPTIDASE 2"/>
    <property type="match status" value="1"/>
</dbReference>
<dbReference type="PANTHER" id="PTHR45777:SF2">
    <property type="entry name" value="METHIONINE AMINOPEPTIDASE 2"/>
    <property type="match status" value="1"/>
</dbReference>
<dbReference type="Pfam" id="PF00557">
    <property type="entry name" value="Peptidase_M24"/>
    <property type="match status" value="1"/>
</dbReference>
<dbReference type="PRINTS" id="PR00599">
    <property type="entry name" value="MAPEPTIDASE"/>
</dbReference>
<dbReference type="SUPFAM" id="SSF55920">
    <property type="entry name" value="Creatinase/aminopeptidase"/>
    <property type="match status" value="1"/>
</dbReference>
<dbReference type="SUPFAM" id="SSF46785">
    <property type="entry name" value="Winged helix' DNA-binding domain"/>
    <property type="match status" value="1"/>
</dbReference>
<dbReference type="PROSITE" id="PS01202">
    <property type="entry name" value="MAP_2"/>
    <property type="match status" value="1"/>
</dbReference>